<dbReference type="EC" id="6.1.1.11" evidence="1"/>
<dbReference type="EMBL" id="AL596173">
    <property type="protein sequence ID" value="CAC98116.1"/>
    <property type="molecule type" value="Genomic_DNA"/>
</dbReference>
<dbReference type="PIR" id="AD1793">
    <property type="entry name" value="AD1793"/>
</dbReference>
<dbReference type="RefSeq" id="WP_010991429.1">
    <property type="nucleotide sequence ID" value="NC_003212.1"/>
</dbReference>
<dbReference type="SMR" id="Q926Z9"/>
<dbReference type="STRING" id="272626.gene:17567277"/>
<dbReference type="KEGG" id="lin:serS"/>
<dbReference type="eggNOG" id="COG0172">
    <property type="taxonomic scope" value="Bacteria"/>
</dbReference>
<dbReference type="HOGENOM" id="CLU_023797_1_1_9"/>
<dbReference type="OrthoDB" id="9804647at2"/>
<dbReference type="UniPathway" id="UPA00906">
    <property type="reaction ID" value="UER00895"/>
</dbReference>
<dbReference type="Proteomes" id="UP000002513">
    <property type="component" value="Chromosome"/>
</dbReference>
<dbReference type="GO" id="GO:0005737">
    <property type="term" value="C:cytoplasm"/>
    <property type="evidence" value="ECO:0007669"/>
    <property type="project" value="UniProtKB-SubCell"/>
</dbReference>
<dbReference type="GO" id="GO:0005524">
    <property type="term" value="F:ATP binding"/>
    <property type="evidence" value="ECO:0007669"/>
    <property type="project" value="UniProtKB-UniRule"/>
</dbReference>
<dbReference type="GO" id="GO:0140096">
    <property type="term" value="F:catalytic activity, acting on a protein"/>
    <property type="evidence" value="ECO:0007669"/>
    <property type="project" value="UniProtKB-ARBA"/>
</dbReference>
<dbReference type="GO" id="GO:0004828">
    <property type="term" value="F:serine-tRNA ligase activity"/>
    <property type="evidence" value="ECO:0007669"/>
    <property type="project" value="UniProtKB-UniRule"/>
</dbReference>
<dbReference type="GO" id="GO:0016740">
    <property type="term" value="F:transferase activity"/>
    <property type="evidence" value="ECO:0007669"/>
    <property type="project" value="UniProtKB-ARBA"/>
</dbReference>
<dbReference type="GO" id="GO:0016260">
    <property type="term" value="P:selenocysteine biosynthetic process"/>
    <property type="evidence" value="ECO:0007669"/>
    <property type="project" value="UniProtKB-UniRule"/>
</dbReference>
<dbReference type="GO" id="GO:0006434">
    <property type="term" value="P:seryl-tRNA aminoacylation"/>
    <property type="evidence" value="ECO:0007669"/>
    <property type="project" value="UniProtKB-UniRule"/>
</dbReference>
<dbReference type="CDD" id="cd00770">
    <property type="entry name" value="SerRS_core"/>
    <property type="match status" value="1"/>
</dbReference>
<dbReference type="Gene3D" id="3.30.930.10">
    <property type="entry name" value="Bira Bifunctional Protein, Domain 2"/>
    <property type="match status" value="1"/>
</dbReference>
<dbReference type="Gene3D" id="1.10.287.40">
    <property type="entry name" value="Serine-tRNA synthetase, tRNA binding domain"/>
    <property type="match status" value="1"/>
</dbReference>
<dbReference type="HAMAP" id="MF_00176">
    <property type="entry name" value="Ser_tRNA_synth_type1"/>
    <property type="match status" value="1"/>
</dbReference>
<dbReference type="InterPro" id="IPR002314">
    <property type="entry name" value="aa-tRNA-synt_IIb"/>
</dbReference>
<dbReference type="InterPro" id="IPR006195">
    <property type="entry name" value="aa-tRNA-synth_II"/>
</dbReference>
<dbReference type="InterPro" id="IPR045864">
    <property type="entry name" value="aa-tRNA-synth_II/BPL/LPL"/>
</dbReference>
<dbReference type="InterPro" id="IPR002317">
    <property type="entry name" value="Ser-tRNA-ligase_type_1"/>
</dbReference>
<dbReference type="InterPro" id="IPR015866">
    <property type="entry name" value="Ser-tRNA-synth_1_N"/>
</dbReference>
<dbReference type="InterPro" id="IPR042103">
    <property type="entry name" value="SerRS_1_N_sf"/>
</dbReference>
<dbReference type="InterPro" id="IPR033729">
    <property type="entry name" value="SerRS_core"/>
</dbReference>
<dbReference type="InterPro" id="IPR010978">
    <property type="entry name" value="tRNA-bd_arm"/>
</dbReference>
<dbReference type="NCBIfam" id="TIGR00414">
    <property type="entry name" value="serS"/>
    <property type="match status" value="1"/>
</dbReference>
<dbReference type="PANTHER" id="PTHR43697:SF1">
    <property type="entry name" value="SERINE--TRNA LIGASE"/>
    <property type="match status" value="1"/>
</dbReference>
<dbReference type="PANTHER" id="PTHR43697">
    <property type="entry name" value="SERYL-TRNA SYNTHETASE"/>
    <property type="match status" value="1"/>
</dbReference>
<dbReference type="Pfam" id="PF02403">
    <property type="entry name" value="Seryl_tRNA_N"/>
    <property type="match status" value="1"/>
</dbReference>
<dbReference type="Pfam" id="PF00587">
    <property type="entry name" value="tRNA-synt_2b"/>
    <property type="match status" value="1"/>
</dbReference>
<dbReference type="PIRSF" id="PIRSF001529">
    <property type="entry name" value="Ser-tRNA-synth_IIa"/>
    <property type="match status" value="1"/>
</dbReference>
<dbReference type="PRINTS" id="PR00981">
    <property type="entry name" value="TRNASYNTHSER"/>
</dbReference>
<dbReference type="SUPFAM" id="SSF55681">
    <property type="entry name" value="Class II aaRS and biotin synthetases"/>
    <property type="match status" value="1"/>
</dbReference>
<dbReference type="SUPFAM" id="SSF46589">
    <property type="entry name" value="tRNA-binding arm"/>
    <property type="match status" value="1"/>
</dbReference>
<dbReference type="PROSITE" id="PS50862">
    <property type="entry name" value="AA_TRNA_LIGASE_II"/>
    <property type="match status" value="1"/>
</dbReference>
<evidence type="ECO:0000255" key="1">
    <source>
        <dbReference type="HAMAP-Rule" id="MF_00176"/>
    </source>
</evidence>
<comment type="function">
    <text evidence="1">Catalyzes the attachment of serine to tRNA(Ser). Is also able to aminoacylate tRNA(Sec) with serine, to form the misacylated tRNA L-seryl-tRNA(Sec), which will be further converted into selenocysteinyl-tRNA(Sec).</text>
</comment>
<comment type="catalytic activity">
    <reaction evidence="1">
        <text>tRNA(Ser) + L-serine + ATP = L-seryl-tRNA(Ser) + AMP + diphosphate + H(+)</text>
        <dbReference type="Rhea" id="RHEA:12292"/>
        <dbReference type="Rhea" id="RHEA-COMP:9669"/>
        <dbReference type="Rhea" id="RHEA-COMP:9703"/>
        <dbReference type="ChEBI" id="CHEBI:15378"/>
        <dbReference type="ChEBI" id="CHEBI:30616"/>
        <dbReference type="ChEBI" id="CHEBI:33019"/>
        <dbReference type="ChEBI" id="CHEBI:33384"/>
        <dbReference type="ChEBI" id="CHEBI:78442"/>
        <dbReference type="ChEBI" id="CHEBI:78533"/>
        <dbReference type="ChEBI" id="CHEBI:456215"/>
        <dbReference type="EC" id="6.1.1.11"/>
    </reaction>
</comment>
<comment type="catalytic activity">
    <reaction evidence="1">
        <text>tRNA(Sec) + L-serine + ATP = L-seryl-tRNA(Sec) + AMP + diphosphate + H(+)</text>
        <dbReference type="Rhea" id="RHEA:42580"/>
        <dbReference type="Rhea" id="RHEA-COMP:9742"/>
        <dbReference type="Rhea" id="RHEA-COMP:10128"/>
        <dbReference type="ChEBI" id="CHEBI:15378"/>
        <dbReference type="ChEBI" id="CHEBI:30616"/>
        <dbReference type="ChEBI" id="CHEBI:33019"/>
        <dbReference type="ChEBI" id="CHEBI:33384"/>
        <dbReference type="ChEBI" id="CHEBI:78442"/>
        <dbReference type="ChEBI" id="CHEBI:78533"/>
        <dbReference type="ChEBI" id="CHEBI:456215"/>
        <dbReference type="EC" id="6.1.1.11"/>
    </reaction>
</comment>
<comment type="pathway">
    <text evidence="1">Aminoacyl-tRNA biosynthesis; selenocysteinyl-tRNA(Sec) biosynthesis; L-seryl-tRNA(Sec) from L-serine and tRNA(Sec): step 1/1.</text>
</comment>
<comment type="subunit">
    <text evidence="1">Homodimer. The tRNA molecule binds across the dimer.</text>
</comment>
<comment type="subcellular location">
    <subcellularLocation>
        <location evidence="1">Cytoplasm</location>
    </subcellularLocation>
</comment>
<comment type="domain">
    <text evidence="1">Consists of two distinct domains, a catalytic core and a N-terminal extension that is involved in tRNA binding.</text>
</comment>
<comment type="similarity">
    <text evidence="1">Belongs to the class-II aminoacyl-tRNA synthetase family. Type-1 seryl-tRNA synthetase subfamily.</text>
</comment>
<name>SYS_LISIN</name>
<gene>
    <name evidence="1" type="primary">serS</name>
    <name type="ordered locus">lin2890</name>
</gene>
<feature type="chain" id="PRO_0000122072" description="Serine--tRNA ligase">
    <location>
        <begin position="1"/>
        <end position="427"/>
    </location>
</feature>
<feature type="binding site" evidence="1">
    <location>
        <begin position="231"/>
        <end position="233"/>
    </location>
    <ligand>
        <name>L-serine</name>
        <dbReference type="ChEBI" id="CHEBI:33384"/>
    </ligand>
</feature>
<feature type="binding site" evidence="1">
    <location>
        <begin position="262"/>
        <end position="264"/>
    </location>
    <ligand>
        <name>ATP</name>
        <dbReference type="ChEBI" id="CHEBI:30616"/>
    </ligand>
</feature>
<feature type="binding site" evidence="1">
    <location>
        <position position="285"/>
    </location>
    <ligand>
        <name>L-serine</name>
        <dbReference type="ChEBI" id="CHEBI:33384"/>
    </ligand>
</feature>
<feature type="binding site" evidence="1">
    <location>
        <begin position="349"/>
        <end position="352"/>
    </location>
    <ligand>
        <name>ATP</name>
        <dbReference type="ChEBI" id="CHEBI:30616"/>
    </ligand>
</feature>
<feature type="binding site" evidence="1">
    <location>
        <position position="385"/>
    </location>
    <ligand>
        <name>L-serine</name>
        <dbReference type="ChEBI" id="CHEBI:33384"/>
    </ligand>
</feature>
<protein>
    <recommendedName>
        <fullName evidence="1">Serine--tRNA ligase</fullName>
        <ecNumber evidence="1">6.1.1.11</ecNumber>
    </recommendedName>
    <alternativeName>
        <fullName evidence="1">Seryl-tRNA synthetase</fullName>
        <shortName evidence="1">SerRS</shortName>
    </alternativeName>
    <alternativeName>
        <fullName evidence="1">Seryl-tRNA(Ser/Sec) synthetase</fullName>
    </alternativeName>
</protein>
<reference key="1">
    <citation type="journal article" date="2001" name="Science">
        <title>Comparative genomics of Listeria species.</title>
        <authorList>
            <person name="Glaser P."/>
            <person name="Frangeul L."/>
            <person name="Buchrieser C."/>
            <person name="Rusniok C."/>
            <person name="Amend A."/>
            <person name="Baquero F."/>
            <person name="Berche P."/>
            <person name="Bloecker H."/>
            <person name="Brandt P."/>
            <person name="Chakraborty T."/>
            <person name="Charbit A."/>
            <person name="Chetouani F."/>
            <person name="Couve E."/>
            <person name="de Daruvar A."/>
            <person name="Dehoux P."/>
            <person name="Domann E."/>
            <person name="Dominguez-Bernal G."/>
            <person name="Duchaud E."/>
            <person name="Durant L."/>
            <person name="Dussurget O."/>
            <person name="Entian K.-D."/>
            <person name="Fsihi H."/>
            <person name="Garcia-del Portillo F."/>
            <person name="Garrido P."/>
            <person name="Gautier L."/>
            <person name="Goebel W."/>
            <person name="Gomez-Lopez N."/>
            <person name="Hain T."/>
            <person name="Hauf J."/>
            <person name="Jackson D."/>
            <person name="Jones L.-M."/>
            <person name="Kaerst U."/>
            <person name="Kreft J."/>
            <person name="Kuhn M."/>
            <person name="Kunst F."/>
            <person name="Kurapkat G."/>
            <person name="Madueno E."/>
            <person name="Maitournam A."/>
            <person name="Mata Vicente J."/>
            <person name="Ng E."/>
            <person name="Nedjari H."/>
            <person name="Nordsiek G."/>
            <person name="Novella S."/>
            <person name="de Pablos B."/>
            <person name="Perez-Diaz J.-C."/>
            <person name="Purcell R."/>
            <person name="Remmel B."/>
            <person name="Rose M."/>
            <person name="Schlueter T."/>
            <person name="Simoes N."/>
            <person name="Tierrez A."/>
            <person name="Vazquez-Boland J.-A."/>
            <person name="Voss H."/>
            <person name="Wehland J."/>
            <person name="Cossart P."/>
        </authorList>
    </citation>
    <scope>NUCLEOTIDE SEQUENCE [LARGE SCALE GENOMIC DNA]</scope>
    <source>
        <strain>ATCC BAA-680 / CLIP 11262</strain>
    </source>
</reference>
<accession>Q926Z9</accession>
<proteinExistence type="inferred from homology"/>
<sequence length="427" mass="49053">MLDVKLLRNNFEEVKQKLQNRGEDLGEFEKFGELDKRRRTLIVETEALKSQRNEVSQEIAKLKREKQDADAKIEEMRVVGDRIKTLDIELREIDEKLDTILMSIPNIPHESTPVGESEDDNVEIRKWGEVREFDFEPKAHWDLGTDLDILDFENAAKVTGSRFVFYKKLGARLERALINFMMDLHSNEHGYEEMLPPYMVNRASMTGTGQLPKFEEDAFLIEAEDYFLIPTAEVPVTNYHREDILKAEDLPRKYTAFSACFRSEAGSAGRDTRGLIRQHQFNKVELVQFVKPEDSYAALEKLTGCAEEVLRRLELPYRVLSMCTADLGFTAAKKYDLEVWIPSYDSYREISSCSNFESFQARRANIRFRREPGSKPEYVHTLNGSGLALGRTVAAILENYQEADGSVLIPKVLQGYMGGIEKIELPK</sequence>
<keyword id="KW-0030">Aminoacyl-tRNA synthetase</keyword>
<keyword id="KW-0067">ATP-binding</keyword>
<keyword id="KW-0963">Cytoplasm</keyword>
<keyword id="KW-0436">Ligase</keyword>
<keyword id="KW-0547">Nucleotide-binding</keyword>
<keyword id="KW-0648">Protein biosynthesis</keyword>
<organism>
    <name type="scientific">Listeria innocua serovar 6a (strain ATCC BAA-680 / CLIP 11262)</name>
    <dbReference type="NCBI Taxonomy" id="272626"/>
    <lineage>
        <taxon>Bacteria</taxon>
        <taxon>Bacillati</taxon>
        <taxon>Bacillota</taxon>
        <taxon>Bacilli</taxon>
        <taxon>Bacillales</taxon>
        <taxon>Listeriaceae</taxon>
        <taxon>Listeria</taxon>
    </lineage>
</organism>